<feature type="chain" id="PRO_0000286751" description="2-aminoethylphosphonate--pyruvate transaminase">
    <location>
        <begin position="1"/>
        <end position="380"/>
    </location>
</feature>
<feature type="modified residue" description="N6-(pyridoxal phosphate)lysine" evidence="1">
    <location>
        <position position="204"/>
    </location>
</feature>
<gene>
    <name evidence="1" type="primary">phnW</name>
    <name type="ordered locus">AHA_1938</name>
</gene>
<keyword id="KW-0032">Aminotransferase</keyword>
<keyword id="KW-0663">Pyridoxal phosphate</keyword>
<keyword id="KW-0670">Pyruvate</keyword>
<keyword id="KW-1185">Reference proteome</keyword>
<keyword id="KW-0808">Transferase</keyword>
<accession>A0KJL8</accession>
<comment type="function">
    <text evidence="1">Involved in phosphonate degradation.</text>
</comment>
<comment type="catalytic activity">
    <reaction evidence="1">
        <text>(2-aminoethyl)phosphonate + pyruvate = phosphonoacetaldehyde + L-alanine</text>
        <dbReference type="Rhea" id="RHEA:17021"/>
        <dbReference type="ChEBI" id="CHEBI:15361"/>
        <dbReference type="ChEBI" id="CHEBI:57418"/>
        <dbReference type="ChEBI" id="CHEBI:57972"/>
        <dbReference type="ChEBI" id="CHEBI:58383"/>
        <dbReference type="EC" id="2.6.1.37"/>
    </reaction>
</comment>
<comment type="cofactor">
    <cofactor evidence="1">
        <name>pyridoxal 5'-phosphate</name>
        <dbReference type="ChEBI" id="CHEBI:597326"/>
    </cofactor>
</comment>
<comment type="subunit">
    <text evidence="1">Homodimer.</text>
</comment>
<comment type="similarity">
    <text evidence="1">Belongs to the class-V pyridoxal-phosphate-dependent aminotransferase family. PhnW subfamily.</text>
</comment>
<organism>
    <name type="scientific">Aeromonas hydrophila subsp. hydrophila (strain ATCC 7966 / DSM 30187 / BCRC 13018 / CCUG 14551 / JCM 1027 / KCTC 2358 / NCIMB 9240 / NCTC 8049)</name>
    <dbReference type="NCBI Taxonomy" id="380703"/>
    <lineage>
        <taxon>Bacteria</taxon>
        <taxon>Pseudomonadati</taxon>
        <taxon>Pseudomonadota</taxon>
        <taxon>Gammaproteobacteria</taxon>
        <taxon>Aeromonadales</taxon>
        <taxon>Aeromonadaceae</taxon>
        <taxon>Aeromonas</taxon>
    </lineage>
</organism>
<name>PHNW_AERHH</name>
<proteinExistence type="inferred from homology"/>
<reference key="1">
    <citation type="journal article" date="2006" name="J. Bacteriol.">
        <title>Genome sequence of Aeromonas hydrophila ATCC 7966T: jack of all trades.</title>
        <authorList>
            <person name="Seshadri R."/>
            <person name="Joseph S.W."/>
            <person name="Chopra A.K."/>
            <person name="Sha J."/>
            <person name="Shaw J."/>
            <person name="Graf J."/>
            <person name="Haft D.H."/>
            <person name="Wu M."/>
            <person name="Ren Q."/>
            <person name="Rosovitz M.J."/>
            <person name="Madupu R."/>
            <person name="Tallon L."/>
            <person name="Kim M."/>
            <person name="Jin S."/>
            <person name="Vuong H."/>
            <person name="Stine O.C."/>
            <person name="Ali A."/>
            <person name="Horneman A.J."/>
            <person name="Heidelberg J.F."/>
        </authorList>
    </citation>
    <scope>NUCLEOTIDE SEQUENCE [LARGE SCALE GENOMIC DNA]</scope>
    <source>
        <strain>ATCC 7966 / DSM 30187 / BCRC 13018 / CCUG 14551 / JCM 1027 / KCTC 2358 / NCIMB 9240 / NCTC 8049</strain>
    </source>
</reference>
<protein>
    <recommendedName>
        <fullName evidence="1">2-aminoethylphosphonate--pyruvate transaminase</fullName>
        <ecNumber evidence="1">2.6.1.37</ecNumber>
    </recommendedName>
    <alternativeName>
        <fullName evidence="1">2-aminoethylphosphonate aminotransferase</fullName>
    </alternativeName>
    <alternativeName>
        <fullName evidence="1">AEP transaminase</fullName>
        <shortName evidence="1">AEPT</shortName>
    </alternativeName>
</protein>
<sequence>MTHIPAAPAAVDYLLLTPGPLSTTATVRAAMLQDSCTWDADYNQGVVEPIRRELVRLAAGPEYQSDYSAVLLQGSGSYVVESVLGSAIGVDECLLIINNGAYGARMGEMARCLGLRHHELDCGETTRPEAAAIEAMLVRHPEITHLAMVHCETTTGMLNPLEEVAALCQRRGIRLIVDAMSSFGGIPIDMGRLGIEFLISSANKCIQGVPGFGFVIARRAALAACAGCARSVSLDLHAQWQTMEQQGGKWRFTSPTHTVLAFAQALRELDEEGGIAARHRRYRDNQRTLVDGMAALGFAPLLPEQWQSPIITAFYSPAHPDYRFADFYQRLKAQGFVIYPGKVSQADCFRIGNIGDVTPARVRCLLVAMASACYWQGDAR</sequence>
<evidence type="ECO:0000255" key="1">
    <source>
        <dbReference type="HAMAP-Rule" id="MF_01376"/>
    </source>
</evidence>
<dbReference type="EC" id="2.6.1.37" evidence="1"/>
<dbReference type="EMBL" id="CP000462">
    <property type="protein sequence ID" value="ABK39573.1"/>
    <property type="molecule type" value="Genomic_DNA"/>
</dbReference>
<dbReference type="RefSeq" id="WP_011705808.1">
    <property type="nucleotide sequence ID" value="NC_008570.1"/>
</dbReference>
<dbReference type="RefSeq" id="YP_856469.1">
    <property type="nucleotide sequence ID" value="NC_008570.1"/>
</dbReference>
<dbReference type="SMR" id="A0KJL8"/>
<dbReference type="STRING" id="380703.AHA_1938"/>
<dbReference type="EnsemblBacteria" id="ABK39573">
    <property type="protein sequence ID" value="ABK39573"/>
    <property type="gene ID" value="AHA_1938"/>
</dbReference>
<dbReference type="GeneID" id="4488652"/>
<dbReference type="KEGG" id="aha:AHA_1938"/>
<dbReference type="PATRIC" id="fig|380703.7.peg.1953"/>
<dbReference type="eggNOG" id="COG0075">
    <property type="taxonomic scope" value="Bacteria"/>
</dbReference>
<dbReference type="HOGENOM" id="CLU_027686_3_1_6"/>
<dbReference type="OrthoDB" id="9766472at2"/>
<dbReference type="Proteomes" id="UP000000756">
    <property type="component" value="Chromosome"/>
</dbReference>
<dbReference type="GO" id="GO:0047304">
    <property type="term" value="F:2-aminoethylphosphonate-pyruvate transaminase activity"/>
    <property type="evidence" value="ECO:0007669"/>
    <property type="project" value="UniProtKB-UniRule"/>
</dbReference>
<dbReference type="GO" id="GO:0019700">
    <property type="term" value="P:organic phosphonate catabolic process"/>
    <property type="evidence" value="ECO:0007669"/>
    <property type="project" value="InterPro"/>
</dbReference>
<dbReference type="Gene3D" id="3.90.1150.10">
    <property type="entry name" value="Aspartate Aminotransferase, domain 1"/>
    <property type="match status" value="1"/>
</dbReference>
<dbReference type="Gene3D" id="3.40.640.10">
    <property type="entry name" value="Type I PLP-dependent aspartate aminotransferase-like (Major domain)"/>
    <property type="match status" value="1"/>
</dbReference>
<dbReference type="HAMAP" id="MF_01376">
    <property type="entry name" value="PhnW_aminotrans_5"/>
    <property type="match status" value="1"/>
</dbReference>
<dbReference type="InterPro" id="IPR000192">
    <property type="entry name" value="Aminotrans_V_dom"/>
</dbReference>
<dbReference type="InterPro" id="IPR012703">
    <property type="entry name" value="NH2EtPonate_pyrv_transaminase"/>
</dbReference>
<dbReference type="InterPro" id="IPR015424">
    <property type="entry name" value="PyrdxlP-dep_Trfase"/>
</dbReference>
<dbReference type="InterPro" id="IPR015421">
    <property type="entry name" value="PyrdxlP-dep_Trfase_major"/>
</dbReference>
<dbReference type="InterPro" id="IPR015422">
    <property type="entry name" value="PyrdxlP-dep_Trfase_small"/>
</dbReference>
<dbReference type="InterPro" id="IPR024169">
    <property type="entry name" value="SP_NH2Trfase/AEP_transaminase"/>
</dbReference>
<dbReference type="NCBIfam" id="TIGR03301">
    <property type="entry name" value="PhnW-AepZ"/>
    <property type="match status" value="1"/>
</dbReference>
<dbReference type="NCBIfam" id="NF010006">
    <property type="entry name" value="PRK13479.1"/>
    <property type="match status" value="1"/>
</dbReference>
<dbReference type="NCBIfam" id="TIGR02326">
    <property type="entry name" value="transamin_PhnW"/>
    <property type="match status" value="1"/>
</dbReference>
<dbReference type="PANTHER" id="PTHR42778">
    <property type="entry name" value="2-AMINOETHYLPHOSPHONATE--PYRUVATE TRANSAMINASE"/>
    <property type="match status" value="1"/>
</dbReference>
<dbReference type="PANTHER" id="PTHR42778:SF1">
    <property type="entry name" value="2-AMINOETHYLPHOSPHONATE--PYRUVATE TRANSAMINASE"/>
    <property type="match status" value="1"/>
</dbReference>
<dbReference type="Pfam" id="PF00266">
    <property type="entry name" value="Aminotran_5"/>
    <property type="match status" value="1"/>
</dbReference>
<dbReference type="PIRSF" id="PIRSF000524">
    <property type="entry name" value="SPT"/>
    <property type="match status" value="1"/>
</dbReference>
<dbReference type="SUPFAM" id="SSF53383">
    <property type="entry name" value="PLP-dependent transferases"/>
    <property type="match status" value="1"/>
</dbReference>